<sequence>MDLASLRAQQIELASSVIREDRLDKDPPDLIAGADVGFEQGGEVTRAAMVLLKYPSLELVEYKVARIATTMPYIPGFLSFREYPALLAAWEMLSQKPDLVFVDGHGISHPRRLGVASHFGLLVDVPTIGVAKKRLCGKFEPLSSEPGALAPLMDKGEQLAWVWRSKARCNPLFIATGHRVSVDSALAWVQRCMKGYRLPEPTRWADAVASERPAFVRYTANQP</sequence>
<reference key="1">
    <citation type="journal article" date="2009" name="PLoS Genet.">
        <title>Organised genome dynamics in the Escherichia coli species results in highly diverse adaptive paths.</title>
        <authorList>
            <person name="Touchon M."/>
            <person name="Hoede C."/>
            <person name="Tenaillon O."/>
            <person name="Barbe V."/>
            <person name="Baeriswyl S."/>
            <person name="Bidet P."/>
            <person name="Bingen E."/>
            <person name="Bonacorsi S."/>
            <person name="Bouchier C."/>
            <person name="Bouvet O."/>
            <person name="Calteau A."/>
            <person name="Chiapello H."/>
            <person name="Clermont O."/>
            <person name="Cruveiller S."/>
            <person name="Danchin A."/>
            <person name="Diard M."/>
            <person name="Dossat C."/>
            <person name="Karoui M.E."/>
            <person name="Frapy E."/>
            <person name="Garry L."/>
            <person name="Ghigo J.M."/>
            <person name="Gilles A.M."/>
            <person name="Johnson J."/>
            <person name="Le Bouguenec C."/>
            <person name="Lescat M."/>
            <person name="Mangenot S."/>
            <person name="Martinez-Jehanne V."/>
            <person name="Matic I."/>
            <person name="Nassif X."/>
            <person name="Oztas S."/>
            <person name="Petit M.A."/>
            <person name="Pichon C."/>
            <person name="Rouy Z."/>
            <person name="Ruf C.S."/>
            <person name="Schneider D."/>
            <person name="Tourret J."/>
            <person name="Vacherie B."/>
            <person name="Vallenet D."/>
            <person name="Medigue C."/>
            <person name="Rocha E.P.C."/>
            <person name="Denamur E."/>
        </authorList>
    </citation>
    <scope>NUCLEOTIDE SEQUENCE [LARGE SCALE GENOMIC DNA]</scope>
    <source>
        <strain>IAI39 / ExPEC</strain>
    </source>
</reference>
<organism>
    <name type="scientific">Escherichia coli O7:K1 (strain IAI39 / ExPEC)</name>
    <dbReference type="NCBI Taxonomy" id="585057"/>
    <lineage>
        <taxon>Bacteria</taxon>
        <taxon>Pseudomonadati</taxon>
        <taxon>Pseudomonadota</taxon>
        <taxon>Gammaproteobacteria</taxon>
        <taxon>Enterobacterales</taxon>
        <taxon>Enterobacteriaceae</taxon>
        <taxon>Escherichia</taxon>
    </lineage>
</organism>
<keyword id="KW-0963">Cytoplasm</keyword>
<keyword id="KW-0227">DNA damage</keyword>
<keyword id="KW-0234">DNA repair</keyword>
<keyword id="KW-0255">Endonuclease</keyword>
<keyword id="KW-0378">Hydrolase</keyword>
<keyword id="KW-0460">Magnesium</keyword>
<keyword id="KW-0479">Metal-binding</keyword>
<keyword id="KW-0540">Nuclease</keyword>
<feature type="chain" id="PRO_1000133872" description="Endonuclease V">
    <location>
        <begin position="1"/>
        <end position="223"/>
    </location>
</feature>
<feature type="binding site" evidence="1">
    <location>
        <position position="35"/>
    </location>
    <ligand>
        <name>Mg(2+)</name>
        <dbReference type="ChEBI" id="CHEBI:18420"/>
    </ligand>
</feature>
<feature type="binding site" evidence="1">
    <location>
        <position position="103"/>
    </location>
    <ligand>
        <name>Mg(2+)</name>
        <dbReference type="ChEBI" id="CHEBI:18420"/>
    </ligand>
</feature>
<feature type="site" description="Interaction with target DNA" evidence="1">
    <location>
        <position position="73"/>
    </location>
</feature>
<dbReference type="EC" id="3.1.21.7" evidence="1"/>
<dbReference type="EMBL" id="CU928164">
    <property type="protein sequence ID" value="CAR20494.1"/>
    <property type="molecule type" value="Genomic_DNA"/>
</dbReference>
<dbReference type="RefSeq" id="WP_000362388.1">
    <property type="nucleotide sequence ID" value="NC_011750.1"/>
</dbReference>
<dbReference type="RefSeq" id="YP_002410262.1">
    <property type="nucleotide sequence ID" value="NC_011750.1"/>
</dbReference>
<dbReference type="SMR" id="B7NRT1"/>
<dbReference type="STRING" id="585057.ECIAI39_4388"/>
<dbReference type="GeneID" id="75169444"/>
<dbReference type="KEGG" id="ect:ECIAI39_4388"/>
<dbReference type="PATRIC" id="fig|585057.6.peg.4534"/>
<dbReference type="HOGENOM" id="CLU_047631_1_0_6"/>
<dbReference type="Proteomes" id="UP000000749">
    <property type="component" value="Chromosome"/>
</dbReference>
<dbReference type="GO" id="GO:0005737">
    <property type="term" value="C:cytoplasm"/>
    <property type="evidence" value="ECO:0007669"/>
    <property type="project" value="UniProtKB-SubCell"/>
</dbReference>
<dbReference type="GO" id="GO:0043737">
    <property type="term" value="F:deoxyribonuclease V activity"/>
    <property type="evidence" value="ECO:0007669"/>
    <property type="project" value="UniProtKB-UniRule"/>
</dbReference>
<dbReference type="GO" id="GO:0000287">
    <property type="term" value="F:magnesium ion binding"/>
    <property type="evidence" value="ECO:0007669"/>
    <property type="project" value="UniProtKB-UniRule"/>
</dbReference>
<dbReference type="GO" id="GO:0016891">
    <property type="term" value="F:RNA endonuclease activity, producing 5'-phosphomonoesters"/>
    <property type="evidence" value="ECO:0007669"/>
    <property type="project" value="TreeGrafter"/>
</dbReference>
<dbReference type="GO" id="GO:0003727">
    <property type="term" value="F:single-stranded RNA binding"/>
    <property type="evidence" value="ECO:0007669"/>
    <property type="project" value="TreeGrafter"/>
</dbReference>
<dbReference type="GO" id="GO:0006281">
    <property type="term" value="P:DNA repair"/>
    <property type="evidence" value="ECO:0007669"/>
    <property type="project" value="UniProtKB-UniRule"/>
</dbReference>
<dbReference type="CDD" id="cd06559">
    <property type="entry name" value="Endonuclease_V"/>
    <property type="match status" value="1"/>
</dbReference>
<dbReference type="FunFam" id="3.30.2170.10:FF:000001">
    <property type="entry name" value="Endonuclease V"/>
    <property type="match status" value="1"/>
</dbReference>
<dbReference type="Gene3D" id="3.30.2170.10">
    <property type="entry name" value="archaeoglobus fulgidus dsm 4304 superfamily"/>
    <property type="match status" value="1"/>
</dbReference>
<dbReference type="HAMAP" id="MF_00801">
    <property type="entry name" value="Endonuclease_5"/>
    <property type="match status" value="1"/>
</dbReference>
<dbReference type="InterPro" id="IPR007581">
    <property type="entry name" value="Endonuclease-V"/>
</dbReference>
<dbReference type="NCBIfam" id="NF008629">
    <property type="entry name" value="PRK11617.1"/>
    <property type="match status" value="1"/>
</dbReference>
<dbReference type="PANTHER" id="PTHR28511">
    <property type="entry name" value="ENDONUCLEASE V"/>
    <property type="match status" value="1"/>
</dbReference>
<dbReference type="PANTHER" id="PTHR28511:SF1">
    <property type="entry name" value="ENDONUCLEASE V"/>
    <property type="match status" value="1"/>
</dbReference>
<dbReference type="Pfam" id="PF04493">
    <property type="entry name" value="Endonuclease_5"/>
    <property type="match status" value="1"/>
</dbReference>
<proteinExistence type="inferred from homology"/>
<accession>B7NRT1</accession>
<comment type="function">
    <text evidence="1">DNA repair enzyme involved in the repair of deaminated bases. Selectively cleaves double-stranded DNA at the second phosphodiester bond 3' to a deoxyinosine leaving behind the intact lesion on the nicked DNA.</text>
</comment>
<comment type="catalytic activity">
    <reaction evidence="1">
        <text>Endonucleolytic cleavage at apurinic or apyrimidinic sites to products with a 5'-phosphate.</text>
        <dbReference type="EC" id="3.1.21.7"/>
    </reaction>
</comment>
<comment type="cofactor">
    <cofactor evidence="1">
        <name>Mg(2+)</name>
        <dbReference type="ChEBI" id="CHEBI:18420"/>
    </cofactor>
</comment>
<comment type="subcellular location">
    <subcellularLocation>
        <location evidence="1">Cytoplasm</location>
    </subcellularLocation>
</comment>
<comment type="similarity">
    <text evidence="1">Belongs to the endonuclease V family.</text>
</comment>
<name>NFI_ECO7I</name>
<protein>
    <recommendedName>
        <fullName evidence="1">Endonuclease V</fullName>
        <ecNumber evidence="1">3.1.21.7</ecNumber>
    </recommendedName>
    <alternativeName>
        <fullName evidence="1">Deoxyinosine 3'endonuclease</fullName>
    </alternativeName>
    <alternativeName>
        <fullName evidence="1">Deoxyribonuclease V</fullName>
        <shortName evidence="1">DNase V</shortName>
    </alternativeName>
</protein>
<evidence type="ECO:0000255" key="1">
    <source>
        <dbReference type="HAMAP-Rule" id="MF_00801"/>
    </source>
</evidence>
<gene>
    <name evidence="1" type="primary">nfi</name>
    <name type="ordered locus">ECIAI39_4388</name>
</gene>